<organism>
    <name type="scientific">Xanthomonas euvesicatoria pv. vesicatoria (strain 85-10)</name>
    <name type="common">Xanthomonas campestris pv. vesicatoria</name>
    <dbReference type="NCBI Taxonomy" id="316273"/>
    <lineage>
        <taxon>Bacteria</taxon>
        <taxon>Pseudomonadati</taxon>
        <taxon>Pseudomonadota</taxon>
        <taxon>Gammaproteobacteria</taxon>
        <taxon>Lysobacterales</taxon>
        <taxon>Lysobacteraceae</taxon>
        <taxon>Xanthomonas</taxon>
    </lineage>
</organism>
<evidence type="ECO:0000255" key="1">
    <source>
        <dbReference type="HAMAP-Rule" id="MF_00270"/>
    </source>
</evidence>
<evidence type="ECO:0000305" key="2"/>
<comment type="function">
    <text evidence="1">Binds as a heterodimer with protein bS6 to the central domain of the 16S rRNA, where it helps stabilize the platform of the 30S subunit.</text>
</comment>
<comment type="subunit">
    <text evidence="1">Part of the 30S ribosomal subunit. Forms a tight heterodimer with protein bS6.</text>
</comment>
<comment type="similarity">
    <text evidence="1">Belongs to the bacterial ribosomal protein bS18 family.</text>
</comment>
<reference key="1">
    <citation type="journal article" date="2005" name="J. Bacteriol.">
        <title>Insights into genome plasticity and pathogenicity of the plant pathogenic Bacterium Xanthomonas campestris pv. vesicatoria revealed by the complete genome sequence.</title>
        <authorList>
            <person name="Thieme F."/>
            <person name="Koebnik R."/>
            <person name="Bekel T."/>
            <person name="Berger C."/>
            <person name="Boch J."/>
            <person name="Buettner D."/>
            <person name="Caldana C."/>
            <person name="Gaigalat L."/>
            <person name="Goesmann A."/>
            <person name="Kay S."/>
            <person name="Kirchner O."/>
            <person name="Lanz C."/>
            <person name="Linke B."/>
            <person name="McHardy A.C."/>
            <person name="Meyer F."/>
            <person name="Mittenhuber G."/>
            <person name="Nies D.H."/>
            <person name="Niesbach-Kloesgen U."/>
            <person name="Patschkowski T."/>
            <person name="Rueckert C."/>
            <person name="Rupp O."/>
            <person name="Schneiker S."/>
            <person name="Schuster S.C."/>
            <person name="Vorhoelter F.J."/>
            <person name="Weber E."/>
            <person name="Puehler A."/>
            <person name="Bonas U."/>
            <person name="Bartels D."/>
            <person name="Kaiser O."/>
        </authorList>
    </citation>
    <scope>NUCLEOTIDE SEQUENCE [LARGE SCALE GENOMIC DNA]</scope>
    <source>
        <strain>85-10</strain>
    </source>
</reference>
<proteinExistence type="inferred from homology"/>
<protein>
    <recommendedName>
        <fullName evidence="1">Small ribosomal subunit protein bS18</fullName>
    </recommendedName>
    <alternativeName>
        <fullName evidence="2">30S ribosomal protein S18</fullName>
    </alternativeName>
</protein>
<feature type="chain" id="PRO_1000003657" description="Small ribosomal subunit protein bS18">
    <location>
        <begin position="1"/>
        <end position="76"/>
    </location>
</feature>
<name>RS18_XANE5</name>
<gene>
    <name evidence="1" type="primary">rpsR</name>
    <name type="ordered locus">XCV1662</name>
</gene>
<dbReference type="EMBL" id="AM039952">
    <property type="protein sequence ID" value="CAJ23339.1"/>
    <property type="molecule type" value="Genomic_DNA"/>
</dbReference>
<dbReference type="RefSeq" id="WP_002804494.1">
    <property type="nucleotide sequence ID" value="NZ_CP017190.1"/>
</dbReference>
<dbReference type="SMR" id="Q3BV20"/>
<dbReference type="STRING" id="456327.BJD11_14270"/>
<dbReference type="GeneID" id="97510001"/>
<dbReference type="KEGG" id="xcv:XCV1662"/>
<dbReference type="eggNOG" id="COG0238">
    <property type="taxonomic scope" value="Bacteria"/>
</dbReference>
<dbReference type="HOGENOM" id="CLU_148710_2_3_6"/>
<dbReference type="Proteomes" id="UP000007069">
    <property type="component" value="Chromosome"/>
</dbReference>
<dbReference type="GO" id="GO:0022627">
    <property type="term" value="C:cytosolic small ribosomal subunit"/>
    <property type="evidence" value="ECO:0007669"/>
    <property type="project" value="TreeGrafter"/>
</dbReference>
<dbReference type="GO" id="GO:0070181">
    <property type="term" value="F:small ribosomal subunit rRNA binding"/>
    <property type="evidence" value="ECO:0007669"/>
    <property type="project" value="TreeGrafter"/>
</dbReference>
<dbReference type="GO" id="GO:0003735">
    <property type="term" value="F:structural constituent of ribosome"/>
    <property type="evidence" value="ECO:0007669"/>
    <property type="project" value="InterPro"/>
</dbReference>
<dbReference type="GO" id="GO:0006412">
    <property type="term" value="P:translation"/>
    <property type="evidence" value="ECO:0007669"/>
    <property type="project" value="UniProtKB-UniRule"/>
</dbReference>
<dbReference type="FunFam" id="4.10.640.10:FF:000001">
    <property type="entry name" value="30S ribosomal protein S18"/>
    <property type="match status" value="1"/>
</dbReference>
<dbReference type="Gene3D" id="4.10.640.10">
    <property type="entry name" value="Ribosomal protein S18"/>
    <property type="match status" value="1"/>
</dbReference>
<dbReference type="HAMAP" id="MF_00270">
    <property type="entry name" value="Ribosomal_bS18"/>
    <property type="match status" value="1"/>
</dbReference>
<dbReference type="InterPro" id="IPR001648">
    <property type="entry name" value="Ribosomal_bS18"/>
</dbReference>
<dbReference type="InterPro" id="IPR018275">
    <property type="entry name" value="Ribosomal_bS18_CS"/>
</dbReference>
<dbReference type="InterPro" id="IPR036870">
    <property type="entry name" value="Ribosomal_bS18_sf"/>
</dbReference>
<dbReference type="NCBIfam" id="TIGR00165">
    <property type="entry name" value="S18"/>
    <property type="match status" value="1"/>
</dbReference>
<dbReference type="PANTHER" id="PTHR13479">
    <property type="entry name" value="30S RIBOSOMAL PROTEIN S18"/>
    <property type="match status" value="1"/>
</dbReference>
<dbReference type="PANTHER" id="PTHR13479:SF40">
    <property type="entry name" value="SMALL RIBOSOMAL SUBUNIT PROTEIN BS18M"/>
    <property type="match status" value="1"/>
</dbReference>
<dbReference type="Pfam" id="PF01084">
    <property type="entry name" value="Ribosomal_S18"/>
    <property type="match status" value="1"/>
</dbReference>
<dbReference type="PRINTS" id="PR00974">
    <property type="entry name" value="RIBOSOMALS18"/>
</dbReference>
<dbReference type="SUPFAM" id="SSF46911">
    <property type="entry name" value="Ribosomal protein S18"/>
    <property type="match status" value="1"/>
</dbReference>
<dbReference type="PROSITE" id="PS00057">
    <property type="entry name" value="RIBOSOMAL_S18"/>
    <property type="match status" value="1"/>
</dbReference>
<accession>Q3BV20</accession>
<keyword id="KW-0687">Ribonucleoprotein</keyword>
<keyword id="KW-0689">Ribosomal protein</keyword>
<keyword id="KW-0694">RNA-binding</keyword>
<keyword id="KW-0699">rRNA-binding</keyword>
<sequence length="76" mass="8959">MSKFFRRRKFCKFTAEGVKEIDYKDLNTLRQYLTENGKIVPSRVTGTKSKYQRQLATAVKRARFLALIPYTDNHDV</sequence>